<dbReference type="EMBL" id="AE000657">
    <property type="protein sequence ID" value="AAC06464.1"/>
    <property type="molecule type" value="Genomic_DNA"/>
</dbReference>
<dbReference type="PIR" id="C70310">
    <property type="entry name" value="C70310"/>
</dbReference>
<dbReference type="STRING" id="224324.aq_106"/>
<dbReference type="EnsemblBacteria" id="AAC06464">
    <property type="protein sequence ID" value="AAC06464"/>
    <property type="gene ID" value="aq_106"/>
</dbReference>
<dbReference type="HOGENOM" id="CLU_1159226_0_0_0"/>
<dbReference type="InParanoid" id="O66510"/>
<dbReference type="Proteomes" id="UP000000798">
    <property type="component" value="Chromosome"/>
</dbReference>
<dbReference type="GO" id="GO:0005886">
    <property type="term" value="C:plasma membrane"/>
    <property type="evidence" value="ECO:0007669"/>
    <property type="project" value="UniProtKB-SubCell"/>
</dbReference>
<accession>O66510</accession>
<comment type="subcellular location">
    <subcellularLocation>
        <location evidence="2">Cell membrane</location>
        <topology evidence="2">Multi-pass membrane protein</topology>
    </subcellularLocation>
</comment>
<reference key="1">
    <citation type="journal article" date="1998" name="Nature">
        <title>The complete genome of the hyperthermophilic bacterium Aquifex aeolicus.</title>
        <authorList>
            <person name="Deckert G."/>
            <person name="Warren P.V."/>
            <person name="Gaasterland T."/>
            <person name="Young W.G."/>
            <person name="Lenox A.L."/>
            <person name="Graham D.E."/>
            <person name="Overbeek R."/>
            <person name="Snead M.A."/>
            <person name="Keller M."/>
            <person name="Aujay M."/>
            <person name="Huber R."/>
            <person name="Feldman R.A."/>
            <person name="Short J.M."/>
            <person name="Olsen G.J."/>
            <person name="Swanson R.V."/>
        </authorList>
    </citation>
    <scope>NUCLEOTIDE SEQUENCE [LARGE SCALE GENOMIC DNA]</scope>
    <source>
        <strain>VF5</strain>
    </source>
</reference>
<proteinExistence type="predicted"/>
<gene>
    <name type="ordered locus">aq_106</name>
</gene>
<sequence length="239" mass="27364">MVAFFSPLREPLSLFRISTSPRSFRKVPHLLLLRQTSPCSSQSFSIIFISLSSSNSREGIVFTLSFLIFESNTLLFSSRKSFTLSAFPSGRTVKYTLALLPSLLSSTLVMLTTPKSVGAFSTTKLAIISFICSPSLSFFLLILYLLQHIFVLFKLFAVEYVRYELVYFLFLEYRTRQQSSRVLVVLYLPEHEKFRKSVLNLSVSVTILAVLQGILFYEKVIFTEFYDVEYSPPSSSYEF</sequence>
<keyword id="KW-1003">Cell membrane</keyword>
<keyword id="KW-0472">Membrane</keyword>
<keyword id="KW-1185">Reference proteome</keyword>
<keyword id="KW-0812">Transmembrane</keyword>
<keyword id="KW-1133">Transmembrane helix</keyword>
<protein>
    <recommendedName>
        <fullName>Uncharacterized protein aq_106</fullName>
    </recommendedName>
</protein>
<organism>
    <name type="scientific">Aquifex aeolicus (strain VF5)</name>
    <dbReference type="NCBI Taxonomy" id="224324"/>
    <lineage>
        <taxon>Bacteria</taxon>
        <taxon>Pseudomonadati</taxon>
        <taxon>Aquificota</taxon>
        <taxon>Aquificia</taxon>
        <taxon>Aquificales</taxon>
        <taxon>Aquificaceae</taxon>
        <taxon>Aquifex</taxon>
    </lineage>
</organism>
<feature type="chain" id="PRO_0000186839" description="Uncharacterized protein aq_106">
    <location>
        <begin position="1"/>
        <end position="239"/>
    </location>
</feature>
<feature type="transmembrane region" description="Helical" evidence="1">
    <location>
        <begin position="125"/>
        <end position="144"/>
    </location>
</feature>
<feature type="transmembrane region" description="Helical" evidence="1">
    <location>
        <begin position="149"/>
        <end position="171"/>
    </location>
</feature>
<feature type="transmembrane region" description="Helical" evidence="1">
    <location>
        <begin position="197"/>
        <end position="216"/>
    </location>
</feature>
<name>Y106_AQUAE</name>
<evidence type="ECO:0000255" key="1"/>
<evidence type="ECO:0000305" key="2"/>